<accession>P54224</accession>
<evidence type="ECO:0000255" key="1">
    <source>
        <dbReference type="HAMAP-Rule" id="MF_00218"/>
    </source>
</evidence>
<feature type="chain" id="PRO_0000187652" description="Uroporphyrinogen decarboxylase">
    <location>
        <begin position="1"/>
        <end position="350"/>
    </location>
</feature>
<feature type="binding site" evidence="1">
    <location>
        <begin position="28"/>
        <end position="32"/>
    </location>
    <ligand>
        <name>substrate</name>
    </ligand>
</feature>
<feature type="binding site" evidence="1">
    <location>
        <position position="47"/>
    </location>
    <ligand>
        <name>substrate</name>
    </ligand>
</feature>
<feature type="binding site" evidence="1">
    <location>
        <position position="78"/>
    </location>
    <ligand>
        <name>substrate</name>
    </ligand>
</feature>
<feature type="binding site" evidence="1">
    <location>
        <position position="155"/>
    </location>
    <ligand>
        <name>substrate</name>
    </ligand>
</feature>
<feature type="binding site" evidence="1">
    <location>
        <position position="210"/>
    </location>
    <ligand>
        <name>substrate</name>
    </ligand>
</feature>
<feature type="binding site" evidence="1">
    <location>
        <position position="325"/>
    </location>
    <ligand>
        <name>substrate</name>
    </ligand>
</feature>
<feature type="site" description="Transition state stabilizer" evidence="1">
    <location>
        <position position="78"/>
    </location>
</feature>
<comment type="function">
    <text evidence="1">Catalyzes the decarboxylation of four acetate groups of uroporphyrinogen-III to yield coproporphyrinogen-III.</text>
</comment>
<comment type="catalytic activity">
    <reaction evidence="1">
        <text>uroporphyrinogen III + 4 H(+) = coproporphyrinogen III + 4 CO2</text>
        <dbReference type="Rhea" id="RHEA:19865"/>
        <dbReference type="ChEBI" id="CHEBI:15378"/>
        <dbReference type="ChEBI" id="CHEBI:16526"/>
        <dbReference type="ChEBI" id="CHEBI:57308"/>
        <dbReference type="ChEBI" id="CHEBI:57309"/>
        <dbReference type="EC" id="4.1.1.37"/>
    </reaction>
</comment>
<comment type="pathway">
    <text evidence="1">Porphyrin-containing compound metabolism; protoporphyrin-IX biosynthesis; coproporphyrinogen-III from 5-aminolevulinate: step 4/4.</text>
</comment>
<comment type="subunit">
    <text evidence="1">Homodimer.</text>
</comment>
<comment type="subcellular location">
    <subcellularLocation>
        <location evidence="1">Cytoplasm</location>
    </subcellularLocation>
</comment>
<comment type="similarity">
    <text evidence="1">Belongs to the uroporphyrinogen decarboxylase family.</text>
</comment>
<keyword id="KW-0963">Cytoplasm</keyword>
<keyword id="KW-0210">Decarboxylase</keyword>
<keyword id="KW-0456">Lyase</keyword>
<keyword id="KW-0627">Porphyrin biosynthesis</keyword>
<keyword id="KW-1185">Reference proteome</keyword>
<sequence length="350" mass="39152">MTEANDLPYLLRVARGEVVKRPPVWMMRQAGRYMKVYRDLRDKYPSFRERSENPDLAIEISLQPWQAFQPDGVIMFSDILTPLPGIGIPFDIIESKGPIIDPPIRTQAQVDQLHALDPESSLPFIKTILGTLRKEVGNQSTVLGFVGAPWTLAAYAIEGKSSKDYKVIKQMAFSEPAILHSFLDKIAEAIAVYVRYQIDCGAQVVQLFDSWAGQLSPQDYDTFALPYQQKVVKLVKEIHPDTPLILYISGSAGILERMGKSGVDIVSVDWTVDMADARQRLGKEMKVQGNMDPGVLFGSQDFIKERILDTVRKAGQGGHIFNLGHGVLVGTPEDNVRFFFETAKQVDQLL</sequence>
<proteinExistence type="inferred from homology"/>
<organism>
    <name type="scientific">Synechocystis sp. (strain ATCC 27184 / PCC 6803 / Kazusa)</name>
    <dbReference type="NCBI Taxonomy" id="1111708"/>
    <lineage>
        <taxon>Bacteria</taxon>
        <taxon>Bacillati</taxon>
        <taxon>Cyanobacteriota</taxon>
        <taxon>Cyanophyceae</taxon>
        <taxon>Synechococcales</taxon>
        <taxon>Merismopediaceae</taxon>
        <taxon>Synechocystis</taxon>
    </lineage>
</organism>
<protein>
    <recommendedName>
        <fullName evidence="1">Uroporphyrinogen decarboxylase</fullName>
        <shortName evidence="1">UPD</shortName>
        <shortName evidence="1">URO-D</shortName>
        <ecNumber evidence="1">4.1.1.37</ecNumber>
    </recommendedName>
</protein>
<reference key="1">
    <citation type="journal article" date="1995" name="DNA Res.">
        <title>Sequence analysis of the genome of the unicellular cyanobacterium Synechocystis sp. strain PCC6803. I. Sequence features in the 1 Mb region from map positions 64% to 92% of the genome.</title>
        <authorList>
            <person name="Kaneko T."/>
            <person name="Tanaka A."/>
            <person name="Sato S."/>
            <person name="Kotani H."/>
            <person name="Sazuka T."/>
            <person name="Miyajima N."/>
            <person name="Sugiura M."/>
            <person name="Tabata S."/>
        </authorList>
    </citation>
    <scope>NUCLEOTIDE SEQUENCE [LARGE SCALE GENOMIC DNA]</scope>
    <source>
        <strain>ATCC 27184 / PCC 6803 / N-1</strain>
    </source>
</reference>
<reference key="2">
    <citation type="journal article" date="1996" name="DNA Res.">
        <title>Sequence analysis of the genome of the unicellular cyanobacterium Synechocystis sp. strain PCC6803. II. Sequence determination of the entire genome and assignment of potential protein-coding regions.</title>
        <authorList>
            <person name="Kaneko T."/>
            <person name="Sato S."/>
            <person name="Kotani H."/>
            <person name="Tanaka A."/>
            <person name="Asamizu E."/>
            <person name="Nakamura Y."/>
            <person name="Miyajima N."/>
            <person name="Hirosawa M."/>
            <person name="Sugiura M."/>
            <person name="Sasamoto S."/>
            <person name="Kimura T."/>
            <person name="Hosouchi T."/>
            <person name="Matsuno A."/>
            <person name="Muraki A."/>
            <person name="Nakazaki N."/>
            <person name="Naruo K."/>
            <person name="Okumura S."/>
            <person name="Shimpo S."/>
            <person name="Takeuchi C."/>
            <person name="Wada T."/>
            <person name="Watanabe A."/>
            <person name="Yamada M."/>
            <person name="Yasuda M."/>
            <person name="Tabata S."/>
        </authorList>
    </citation>
    <scope>NUCLEOTIDE SEQUENCE [LARGE SCALE GENOMIC DNA]</scope>
    <source>
        <strain>ATCC 27184 / PCC 6803 / Kazusa</strain>
    </source>
</reference>
<dbReference type="EC" id="4.1.1.37" evidence="1"/>
<dbReference type="EMBL" id="BA000022">
    <property type="protein sequence ID" value="BAA10824.1"/>
    <property type="molecule type" value="Genomic_DNA"/>
</dbReference>
<dbReference type="PIR" id="S75977">
    <property type="entry name" value="S75977"/>
</dbReference>
<dbReference type="SMR" id="P54224"/>
<dbReference type="FunCoup" id="P54224">
    <property type="interactions" value="481"/>
</dbReference>
<dbReference type="IntAct" id="P54224">
    <property type="interactions" value="4"/>
</dbReference>
<dbReference type="STRING" id="1148.gene:10500328"/>
<dbReference type="MEROPS" id="S14.001"/>
<dbReference type="PaxDb" id="1148-1001337"/>
<dbReference type="EnsemblBacteria" id="BAA10824">
    <property type="protein sequence ID" value="BAA10824"/>
    <property type="gene ID" value="BAA10824"/>
</dbReference>
<dbReference type="KEGG" id="syn:slr0536"/>
<dbReference type="eggNOG" id="COG0407">
    <property type="taxonomic scope" value="Bacteria"/>
</dbReference>
<dbReference type="InParanoid" id="P54224"/>
<dbReference type="PhylomeDB" id="P54224"/>
<dbReference type="UniPathway" id="UPA00251">
    <property type="reaction ID" value="UER00321"/>
</dbReference>
<dbReference type="Proteomes" id="UP000001425">
    <property type="component" value="Chromosome"/>
</dbReference>
<dbReference type="GO" id="GO:0005737">
    <property type="term" value="C:cytoplasm"/>
    <property type="evidence" value="ECO:0007669"/>
    <property type="project" value="UniProtKB-SubCell"/>
</dbReference>
<dbReference type="GO" id="GO:0004853">
    <property type="term" value="F:uroporphyrinogen decarboxylase activity"/>
    <property type="evidence" value="ECO:0007669"/>
    <property type="project" value="UniProtKB-UniRule"/>
</dbReference>
<dbReference type="GO" id="GO:0006782">
    <property type="term" value="P:protoporphyrinogen IX biosynthetic process"/>
    <property type="evidence" value="ECO:0007669"/>
    <property type="project" value="UniProtKB-UniRule"/>
</dbReference>
<dbReference type="CDD" id="cd00717">
    <property type="entry name" value="URO-D"/>
    <property type="match status" value="1"/>
</dbReference>
<dbReference type="FunFam" id="3.20.20.210:FF:000006">
    <property type="entry name" value="Uroporphyrinogen decarboxylase"/>
    <property type="match status" value="1"/>
</dbReference>
<dbReference type="Gene3D" id="3.20.20.210">
    <property type="match status" value="1"/>
</dbReference>
<dbReference type="HAMAP" id="MF_00218">
    <property type="entry name" value="URO_D"/>
    <property type="match status" value="1"/>
</dbReference>
<dbReference type="InterPro" id="IPR038071">
    <property type="entry name" value="UROD/MetE-like_sf"/>
</dbReference>
<dbReference type="InterPro" id="IPR006361">
    <property type="entry name" value="Uroporphyrinogen_deCO2ase_HemE"/>
</dbReference>
<dbReference type="InterPro" id="IPR000257">
    <property type="entry name" value="Uroporphyrinogen_deCOase"/>
</dbReference>
<dbReference type="NCBIfam" id="TIGR01464">
    <property type="entry name" value="hemE"/>
    <property type="match status" value="1"/>
</dbReference>
<dbReference type="PANTHER" id="PTHR21091">
    <property type="entry name" value="METHYLTETRAHYDROFOLATE:HOMOCYSTEINE METHYLTRANSFERASE RELATED"/>
    <property type="match status" value="1"/>
</dbReference>
<dbReference type="PANTHER" id="PTHR21091:SF169">
    <property type="entry name" value="UROPORPHYRINOGEN DECARBOXYLASE"/>
    <property type="match status" value="1"/>
</dbReference>
<dbReference type="Pfam" id="PF01208">
    <property type="entry name" value="URO-D"/>
    <property type="match status" value="1"/>
</dbReference>
<dbReference type="SUPFAM" id="SSF51726">
    <property type="entry name" value="UROD/MetE-like"/>
    <property type="match status" value="1"/>
</dbReference>
<dbReference type="PROSITE" id="PS00906">
    <property type="entry name" value="UROD_1"/>
    <property type="match status" value="1"/>
</dbReference>
<dbReference type="PROSITE" id="PS00907">
    <property type="entry name" value="UROD_2"/>
    <property type="match status" value="1"/>
</dbReference>
<name>DCUP_SYNY3</name>
<gene>
    <name evidence="1" type="primary">hemE</name>
    <name type="ordered locus">slr0536</name>
</gene>